<comment type="function">
    <text evidence="2 3">Chondroitin sulfate-, heparin- and hyaluronan-binding protein (By similarity). May serve to form a basic macromolecular scaffold comprising the insoluble interphotoreceptor matrix (By similarity).</text>
</comment>
<comment type="subcellular location">
    <subcellularLocation>
        <location evidence="2">Cell projection</location>
        <location evidence="2">Cilium</location>
        <location evidence="2">Photoreceptor outer segment</location>
    </subcellularLocation>
    <subcellularLocation>
        <location evidence="2">Secreted</location>
        <location evidence="2">Extracellular space</location>
        <location evidence="2">Extracellular matrix</location>
        <location evidence="2">Interphotoreceptor matrix</location>
    </subcellularLocation>
    <subcellularLocation>
        <location evidence="4">Photoreceptor inner segment</location>
    </subcellularLocation>
</comment>
<comment type="PTM">
    <text evidence="1">Highly glycosylated (N- and O-linked carbohydrates and sialic acid).</text>
</comment>
<gene>
    <name type="primary">IMPG1</name>
    <name type="synonym">MLGAPC</name>
</gene>
<evidence type="ECO:0000250" key="1"/>
<evidence type="ECO:0000250" key="2">
    <source>
        <dbReference type="UniProtKB" id="Q17R60"/>
    </source>
</evidence>
<evidence type="ECO:0000250" key="3">
    <source>
        <dbReference type="UniProtKB" id="Q8JIR8"/>
    </source>
</evidence>
<evidence type="ECO:0000250" key="4">
    <source>
        <dbReference type="UniProtKB" id="Q8R1W8"/>
    </source>
</evidence>
<evidence type="ECO:0000255" key="5"/>
<evidence type="ECO:0000255" key="6">
    <source>
        <dbReference type="PROSITE-ProRule" id="PRU00188"/>
    </source>
</evidence>
<evidence type="ECO:0000256" key="7">
    <source>
        <dbReference type="SAM" id="MobiDB-lite"/>
    </source>
</evidence>
<organism>
    <name type="scientific">Bos taurus</name>
    <name type="common">Bovine</name>
    <dbReference type="NCBI Taxonomy" id="9913"/>
    <lineage>
        <taxon>Eukaryota</taxon>
        <taxon>Metazoa</taxon>
        <taxon>Chordata</taxon>
        <taxon>Craniata</taxon>
        <taxon>Vertebrata</taxon>
        <taxon>Euteleostomi</taxon>
        <taxon>Mammalia</taxon>
        <taxon>Eutheria</taxon>
        <taxon>Laurasiatheria</taxon>
        <taxon>Artiodactyla</taxon>
        <taxon>Ruminantia</taxon>
        <taxon>Pecora</taxon>
        <taxon>Bovidae</taxon>
        <taxon>Bovinae</taxon>
        <taxon>Bos</taxon>
    </lineage>
</organism>
<name>IMPG1_BOVIN</name>
<accession>Q9GMS5</accession>
<dbReference type="EMBL" id="AB047844">
    <property type="protein sequence ID" value="BAB12254.1"/>
    <property type="molecule type" value="mRNA"/>
</dbReference>
<dbReference type="RefSeq" id="NP_776787.1">
    <property type="nucleotide sequence ID" value="NM_174362.2"/>
</dbReference>
<dbReference type="SMR" id="Q9GMS5"/>
<dbReference type="FunCoup" id="Q9GMS5">
    <property type="interactions" value="82"/>
</dbReference>
<dbReference type="STRING" id="9913.ENSBTAP00000028218"/>
<dbReference type="GlyCosmos" id="Q9GMS5">
    <property type="glycosylation" value="7 sites, No reported glycans"/>
</dbReference>
<dbReference type="GlyGen" id="Q9GMS5">
    <property type="glycosylation" value="7 sites"/>
</dbReference>
<dbReference type="PaxDb" id="9913-ENSBTAP00000028218"/>
<dbReference type="GeneID" id="281866"/>
<dbReference type="KEGG" id="bta:281866"/>
<dbReference type="CTD" id="3617"/>
<dbReference type="eggNOG" id="ENOG502QTXX">
    <property type="taxonomic scope" value="Eukaryota"/>
</dbReference>
<dbReference type="InParanoid" id="Q9GMS5"/>
<dbReference type="OrthoDB" id="9908153at2759"/>
<dbReference type="Proteomes" id="UP000009136">
    <property type="component" value="Unplaced"/>
</dbReference>
<dbReference type="GO" id="GO:0005576">
    <property type="term" value="C:extracellular region"/>
    <property type="evidence" value="ECO:0007669"/>
    <property type="project" value="UniProtKB-KW"/>
</dbReference>
<dbReference type="GO" id="GO:0033165">
    <property type="term" value="C:interphotoreceptor matrix"/>
    <property type="evidence" value="ECO:0007669"/>
    <property type="project" value="UniProtKB-SubCell"/>
</dbReference>
<dbReference type="GO" id="GO:0001917">
    <property type="term" value="C:photoreceptor inner segment"/>
    <property type="evidence" value="ECO:0007669"/>
    <property type="project" value="UniProtKB-SubCell"/>
</dbReference>
<dbReference type="GO" id="GO:0001750">
    <property type="term" value="C:photoreceptor outer segment"/>
    <property type="evidence" value="ECO:0007669"/>
    <property type="project" value="UniProtKB-SubCell"/>
</dbReference>
<dbReference type="GO" id="GO:0035374">
    <property type="term" value="F:chondroitin sulfate binding"/>
    <property type="evidence" value="ECO:0000250"/>
    <property type="project" value="UniProtKB"/>
</dbReference>
<dbReference type="GO" id="GO:0008201">
    <property type="term" value="F:heparin binding"/>
    <property type="evidence" value="ECO:0000250"/>
    <property type="project" value="UniProtKB"/>
</dbReference>
<dbReference type="GO" id="GO:0005540">
    <property type="term" value="F:hyaluronic acid binding"/>
    <property type="evidence" value="ECO:0000250"/>
    <property type="project" value="UniProtKB"/>
</dbReference>
<dbReference type="GO" id="GO:0007601">
    <property type="term" value="P:visual perception"/>
    <property type="evidence" value="ECO:0007669"/>
    <property type="project" value="InterPro"/>
</dbReference>
<dbReference type="Gene3D" id="3.30.70.960">
    <property type="entry name" value="SEA domain"/>
    <property type="match status" value="1"/>
</dbReference>
<dbReference type="InterPro" id="IPR039861">
    <property type="entry name" value="IMPG"/>
</dbReference>
<dbReference type="InterPro" id="IPR000082">
    <property type="entry name" value="SEA_dom"/>
</dbReference>
<dbReference type="InterPro" id="IPR036364">
    <property type="entry name" value="SEA_dom_sf"/>
</dbReference>
<dbReference type="PANTHER" id="PTHR12199">
    <property type="entry name" value="INTERPHOTORECEPTOR MATRIX PROTEOGLYCAN"/>
    <property type="match status" value="1"/>
</dbReference>
<dbReference type="PANTHER" id="PTHR12199:SF3">
    <property type="entry name" value="INTERPHOTORECEPTOR MATRIX PROTEOGLYCAN 1"/>
    <property type="match status" value="1"/>
</dbReference>
<dbReference type="Pfam" id="PF01390">
    <property type="entry name" value="SEA"/>
    <property type="match status" value="2"/>
</dbReference>
<dbReference type="SMART" id="SM00200">
    <property type="entry name" value="SEA"/>
    <property type="match status" value="2"/>
</dbReference>
<dbReference type="SUPFAM" id="SSF82671">
    <property type="entry name" value="SEA domain"/>
    <property type="match status" value="2"/>
</dbReference>
<dbReference type="PROSITE" id="PS50024">
    <property type="entry name" value="SEA"/>
    <property type="match status" value="2"/>
</dbReference>
<feature type="signal peptide" evidence="5">
    <location>
        <begin position="1"/>
        <end position="20"/>
    </location>
</feature>
<feature type="chain" id="PRO_0000252237" description="Interphotoreceptor matrix proteoglycan 1">
    <location>
        <begin position="21"/>
        <end position="794"/>
    </location>
</feature>
<feature type="domain" description="SEA 1" evidence="6">
    <location>
        <begin position="236"/>
        <end position="357"/>
    </location>
</feature>
<feature type="domain" description="SEA 2" evidence="6">
    <location>
        <begin position="579"/>
        <end position="692"/>
    </location>
</feature>
<feature type="region of interest" description="Disordered" evidence="7">
    <location>
        <begin position="202"/>
        <end position="221"/>
    </location>
</feature>
<feature type="region of interest" description="Disordered" evidence="7">
    <location>
        <begin position="314"/>
        <end position="355"/>
    </location>
</feature>
<feature type="region of interest" description="Disordered" evidence="7">
    <location>
        <begin position="413"/>
        <end position="449"/>
    </location>
</feature>
<feature type="short sequence motif" description="Heparin- and hyaluronan-binding" evidence="3">
    <location>
        <begin position="629"/>
        <end position="637"/>
    </location>
</feature>
<feature type="compositionally biased region" description="Polar residues" evidence="7">
    <location>
        <begin position="202"/>
        <end position="213"/>
    </location>
</feature>
<feature type="compositionally biased region" description="Basic and acidic residues" evidence="7">
    <location>
        <begin position="332"/>
        <end position="351"/>
    </location>
</feature>
<feature type="glycosylation site" description="O-linked (GalNAc...) threonine" evidence="5">
    <location>
        <position position="425"/>
    </location>
</feature>
<feature type="glycosylation site" description="O-linked (GalNAc...) threonine" evidence="5">
    <location>
        <position position="439"/>
    </location>
</feature>
<feature type="glycosylation site" description="O-linked (GalNAc...) serine" evidence="5">
    <location>
        <position position="443"/>
    </location>
</feature>
<feature type="glycosylation site" description="O-linked (GalNAc...) threonine" evidence="5">
    <location>
        <position position="448"/>
    </location>
</feature>
<feature type="glycosylation site" description="O-linked (GalNAc...) threonine" evidence="5">
    <location>
        <position position="450"/>
    </location>
</feature>
<feature type="glycosylation site" description="N-linked (GlcNAc...) asparagine" evidence="5">
    <location>
        <position position="624"/>
    </location>
</feature>
<feature type="glycosylation site" description="N-linked (GlcNAc...) asparagine" evidence="5">
    <location>
        <position position="656"/>
    </location>
</feature>
<protein>
    <recommendedName>
        <fullName>Interphotoreceptor matrix proteoglycan 1</fullName>
    </recommendedName>
    <alternativeName>
        <fullName>Mucin-like glycoprotein associated with photoreceptor cells</fullName>
    </alternativeName>
    <alternativeName>
        <fullName>Sialoprotein associated with cones and rods</fullName>
    </alternativeName>
</protein>
<keyword id="KW-0966">Cell projection</keyword>
<keyword id="KW-0272">Extracellular matrix</keyword>
<keyword id="KW-0325">Glycoprotein</keyword>
<keyword id="KW-0358">Heparin-binding</keyword>
<keyword id="KW-0373">Hyaluronic acid</keyword>
<keyword id="KW-0675">Receptor</keyword>
<keyword id="KW-1185">Reference proteome</keyword>
<keyword id="KW-0677">Repeat</keyword>
<keyword id="KW-0964">Secreted</keyword>
<keyword id="KW-0730">Sialic acid</keyword>
<keyword id="KW-0732">Signal</keyword>
<proteinExistence type="evidence at transcript level"/>
<sequence>MHLEAARVIFFLWIFLQVQGIKDLSIKIYGSEIKDIDNAPRTEATKNTAKTYKVSTMRRIFDLAKHRTKRSAFFPTGVKVCPQESMEQILASLQAYYRLRVCQEAVWEAYRIFLDRLPEPGEYQDWVSVCQQETFCLFDIGKNFSNSQEHLDLLQQRMKQRNFLERKDEVVTKETLGELGQTPGLQQTLPVSHPGPCLSLPMTTAQRNPQLHPSRTPRVPTRERKIEFTDAAEDALEQKVELSISLANQKFKSELDNSQSPYYLEVAAKSQLQMQKIFKKLPGFKEIHVSGFRPKKERDGTSSTEMQLTAIFKKGKAEAKSPASDPLSLDSNKIESEGDPRGTTEEEKQRELYPTASELRKLISRALEEDQSLDVGTIQFTDEIVGSLPSLDPDTQLVLPTLLTDITKDATLSPELPLGQPRLETVDRAGHSPPGASPTDGWSPPAMTSTSLSETLPFFTASSVFPQTDQSATDIMSIDQTVLIPRLTVPTDDYSAISPLVPEISHLPTSSEDWLSTSSQDTMEYLDGVDLTKTPTSSEGPRNSVGMFPAWIIFLENITPDPGLRYITTSAMTVAARGRELVVFFSLRVANVPFSTDLFNKSSLEYQALEQRFTQLLVPNLRSNLTGFKQLEILNFRNGSVIVNSKVRFAKSVPYNLTKAVRGVLEDFRSTAAQQLDLEIDSYSLDVEPADQADPCKFLACGEFAQCVRNEWTEEAECRCRSGTQALVLPIEDCEDIPGKGTPCRSLDQSKNQVYEPGVKKFQRQQDNKVTMKRKFELLTIGYEEFNYQDWEGN</sequence>
<reference key="1">
    <citation type="journal article" date="2000" name="Invest. Ophthalmol. Vis. Sci.">
        <title>Isolation and characterization of mucinlike glycoprotein associated with photoreceptor cells.</title>
        <authorList>
            <person name="Uehara F."/>
            <person name="Ohba N."/>
            <person name="Ozawa M."/>
        </authorList>
    </citation>
    <scope>NUCLEOTIDE SEQUENCE [MRNA]</scope>
</reference>